<organism>
    <name type="scientific">Canis lupus familiaris</name>
    <name type="common">Dog</name>
    <name type="synonym">Canis familiaris</name>
    <dbReference type="NCBI Taxonomy" id="9615"/>
    <lineage>
        <taxon>Eukaryota</taxon>
        <taxon>Metazoa</taxon>
        <taxon>Chordata</taxon>
        <taxon>Craniata</taxon>
        <taxon>Vertebrata</taxon>
        <taxon>Euteleostomi</taxon>
        <taxon>Mammalia</taxon>
        <taxon>Eutheria</taxon>
        <taxon>Laurasiatheria</taxon>
        <taxon>Carnivora</taxon>
        <taxon>Caniformia</taxon>
        <taxon>Canidae</taxon>
        <taxon>Canis</taxon>
    </lineage>
</organism>
<protein>
    <recommendedName>
        <fullName evidence="1">Dolichyl-diphosphooligosaccharide--protein glycosyltransferase subunit 2</fullName>
    </recommendedName>
    <alternativeName>
        <fullName>Dolichyl-diphosphooligosaccharide--protein glycosyltransferase 63 kDa subunit</fullName>
    </alternativeName>
    <alternativeName>
        <fullName>Ribophorin II</fullName>
        <shortName>RPN-II</shortName>
    </alternativeName>
    <alternativeName>
        <fullName>Ribophorin-2</fullName>
    </alternativeName>
</protein>
<feature type="signal peptide" evidence="3">
    <location>
        <begin position="1"/>
        <end position="22"/>
    </location>
</feature>
<feature type="chain" id="PRO_5003271323" description="Dolichyl-diphosphooligosaccharide--protein glycosyltransferase subunit 2">
    <location>
        <begin position="23"/>
        <end position="631"/>
    </location>
</feature>
<feature type="topological domain" description="Lumenal" evidence="9">
    <location>
        <begin position="23"/>
        <end position="540"/>
    </location>
</feature>
<feature type="transmembrane region" description="Helical" evidence="3">
    <location>
        <begin position="541"/>
        <end position="561"/>
    </location>
</feature>
<feature type="topological domain" description="Cytoplasmic" evidence="9">
    <location>
        <begin position="562"/>
        <end position="571"/>
    </location>
</feature>
<feature type="transmembrane region" description="Helical" evidence="3">
    <location>
        <begin position="572"/>
        <end position="592"/>
    </location>
</feature>
<feature type="topological domain" description="Lumenal" evidence="9">
    <location>
        <begin position="593"/>
        <end position="596"/>
    </location>
</feature>
<feature type="transmembrane region" description="Helical" evidence="3">
    <location>
        <begin position="597"/>
        <end position="617"/>
    </location>
</feature>
<feature type="topological domain" description="Cytoplasmic" evidence="9">
    <location>
        <begin position="618"/>
        <end position="631"/>
    </location>
</feature>
<feature type="glycosylation site" description="N-linked (GlcNAc...) asparagine" evidence="3">
    <location>
        <position position="106"/>
    </location>
</feature>
<feature type="cross-link" description="Glycyl lysine isopeptide (Lys-Gly) (interchain with G-Cter in ubiquitin)" evidence="1">
    <location>
        <position position="154"/>
    </location>
</feature>
<reference key="1">
    <citation type="journal article" date="2005" name="Nature">
        <title>Genome sequence, comparative analysis and haplotype structure of the domestic dog.</title>
        <authorList>
            <person name="Lindblad-Toh K."/>
            <person name="Wade C.M."/>
            <person name="Mikkelsen T.S."/>
            <person name="Karlsson E.K."/>
            <person name="Jaffe D.B."/>
            <person name="Kamal M."/>
            <person name="Clamp M."/>
            <person name="Chang J.L."/>
            <person name="Kulbokas E.J. III"/>
            <person name="Zody M.C."/>
            <person name="Mauceli E."/>
            <person name="Xie X."/>
            <person name="Breen M."/>
            <person name="Wayne R.K."/>
            <person name="Ostrander E.A."/>
            <person name="Ponting C.P."/>
            <person name="Galibert F."/>
            <person name="Smith D.R."/>
            <person name="deJong P.J."/>
            <person name="Kirkness E.F."/>
            <person name="Alvarez P."/>
            <person name="Biagi T."/>
            <person name="Brockman W."/>
            <person name="Butler J."/>
            <person name="Chin C.-W."/>
            <person name="Cook A."/>
            <person name="Cuff J."/>
            <person name="Daly M.J."/>
            <person name="DeCaprio D."/>
            <person name="Gnerre S."/>
            <person name="Grabherr M."/>
            <person name="Kellis M."/>
            <person name="Kleber M."/>
            <person name="Bardeleben C."/>
            <person name="Goodstadt L."/>
            <person name="Heger A."/>
            <person name="Hitte C."/>
            <person name="Kim L."/>
            <person name="Koepfli K.-P."/>
            <person name="Parker H.G."/>
            <person name="Pollinger J.P."/>
            <person name="Searle S.M.J."/>
            <person name="Sutter N.B."/>
            <person name="Thomas R."/>
            <person name="Webber C."/>
            <person name="Baldwin J."/>
            <person name="Abebe A."/>
            <person name="Abouelleil A."/>
            <person name="Aftuck L."/>
            <person name="Ait-Zahra M."/>
            <person name="Aldredge T."/>
            <person name="Allen N."/>
            <person name="An P."/>
            <person name="Anderson S."/>
            <person name="Antoine C."/>
            <person name="Arachchi H."/>
            <person name="Aslam A."/>
            <person name="Ayotte L."/>
            <person name="Bachantsang P."/>
            <person name="Barry A."/>
            <person name="Bayul T."/>
            <person name="Benamara M."/>
            <person name="Berlin A."/>
            <person name="Bessette D."/>
            <person name="Blitshteyn B."/>
            <person name="Bloom T."/>
            <person name="Blye J."/>
            <person name="Boguslavskiy L."/>
            <person name="Bonnet C."/>
            <person name="Boukhgalter B."/>
            <person name="Brown A."/>
            <person name="Cahill P."/>
            <person name="Calixte N."/>
            <person name="Camarata J."/>
            <person name="Cheshatsang Y."/>
            <person name="Chu J."/>
            <person name="Citroen M."/>
            <person name="Collymore A."/>
            <person name="Cooke P."/>
            <person name="Dawoe T."/>
            <person name="Daza R."/>
            <person name="Decktor K."/>
            <person name="DeGray S."/>
            <person name="Dhargay N."/>
            <person name="Dooley K."/>
            <person name="Dooley K."/>
            <person name="Dorje P."/>
            <person name="Dorjee K."/>
            <person name="Dorris L."/>
            <person name="Duffey N."/>
            <person name="Dupes A."/>
            <person name="Egbiremolen O."/>
            <person name="Elong R."/>
            <person name="Falk J."/>
            <person name="Farina A."/>
            <person name="Faro S."/>
            <person name="Ferguson D."/>
            <person name="Ferreira P."/>
            <person name="Fisher S."/>
            <person name="FitzGerald M."/>
            <person name="Foley K."/>
            <person name="Foley C."/>
            <person name="Franke A."/>
            <person name="Friedrich D."/>
            <person name="Gage D."/>
            <person name="Garber M."/>
            <person name="Gearin G."/>
            <person name="Giannoukos G."/>
            <person name="Goode T."/>
            <person name="Goyette A."/>
            <person name="Graham J."/>
            <person name="Grandbois E."/>
            <person name="Gyaltsen K."/>
            <person name="Hafez N."/>
            <person name="Hagopian D."/>
            <person name="Hagos B."/>
            <person name="Hall J."/>
            <person name="Healy C."/>
            <person name="Hegarty R."/>
            <person name="Honan T."/>
            <person name="Horn A."/>
            <person name="Houde N."/>
            <person name="Hughes L."/>
            <person name="Hunnicutt L."/>
            <person name="Husby M."/>
            <person name="Jester B."/>
            <person name="Jones C."/>
            <person name="Kamat A."/>
            <person name="Kanga B."/>
            <person name="Kells C."/>
            <person name="Khazanovich D."/>
            <person name="Kieu A.C."/>
            <person name="Kisner P."/>
            <person name="Kumar M."/>
            <person name="Lance K."/>
            <person name="Landers T."/>
            <person name="Lara M."/>
            <person name="Lee W."/>
            <person name="Leger J.-P."/>
            <person name="Lennon N."/>
            <person name="Leuper L."/>
            <person name="LeVine S."/>
            <person name="Liu J."/>
            <person name="Liu X."/>
            <person name="Lokyitsang Y."/>
            <person name="Lokyitsang T."/>
            <person name="Lui A."/>
            <person name="Macdonald J."/>
            <person name="Major J."/>
            <person name="Marabella R."/>
            <person name="Maru K."/>
            <person name="Matthews C."/>
            <person name="McDonough S."/>
            <person name="Mehta T."/>
            <person name="Meldrim J."/>
            <person name="Melnikov A."/>
            <person name="Meneus L."/>
            <person name="Mihalev A."/>
            <person name="Mihova T."/>
            <person name="Miller K."/>
            <person name="Mittelman R."/>
            <person name="Mlenga V."/>
            <person name="Mulrain L."/>
            <person name="Munson G."/>
            <person name="Navidi A."/>
            <person name="Naylor J."/>
            <person name="Nguyen T."/>
            <person name="Nguyen N."/>
            <person name="Nguyen C."/>
            <person name="Nguyen T."/>
            <person name="Nicol R."/>
            <person name="Norbu N."/>
            <person name="Norbu C."/>
            <person name="Novod N."/>
            <person name="Nyima T."/>
            <person name="Olandt P."/>
            <person name="O'Neill B."/>
            <person name="O'Neill K."/>
            <person name="Osman S."/>
            <person name="Oyono L."/>
            <person name="Patti C."/>
            <person name="Perrin D."/>
            <person name="Phunkhang P."/>
            <person name="Pierre F."/>
            <person name="Priest M."/>
            <person name="Rachupka A."/>
            <person name="Raghuraman S."/>
            <person name="Rameau R."/>
            <person name="Ray V."/>
            <person name="Raymond C."/>
            <person name="Rege F."/>
            <person name="Rise C."/>
            <person name="Rogers J."/>
            <person name="Rogov P."/>
            <person name="Sahalie J."/>
            <person name="Settipalli S."/>
            <person name="Sharpe T."/>
            <person name="Shea T."/>
            <person name="Sheehan M."/>
            <person name="Sherpa N."/>
            <person name="Shi J."/>
            <person name="Shih D."/>
            <person name="Sloan J."/>
            <person name="Smith C."/>
            <person name="Sparrow T."/>
            <person name="Stalker J."/>
            <person name="Stange-Thomann N."/>
            <person name="Stavropoulos S."/>
            <person name="Stone C."/>
            <person name="Stone S."/>
            <person name="Sykes S."/>
            <person name="Tchuinga P."/>
            <person name="Tenzing P."/>
            <person name="Tesfaye S."/>
            <person name="Thoulutsang D."/>
            <person name="Thoulutsang Y."/>
            <person name="Topham K."/>
            <person name="Topping I."/>
            <person name="Tsamla T."/>
            <person name="Vassiliev H."/>
            <person name="Venkataraman V."/>
            <person name="Vo A."/>
            <person name="Wangchuk T."/>
            <person name="Wangdi T."/>
            <person name="Weiand M."/>
            <person name="Wilkinson J."/>
            <person name="Wilson A."/>
            <person name="Yadav S."/>
            <person name="Yang S."/>
            <person name="Yang X."/>
            <person name="Young G."/>
            <person name="Yu Q."/>
            <person name="Zainoun J."/>
            <person name="Zembek L."/>
            <person name="Zimmer A."/>
            <person name="Lander E.S."/>
        </authorList>
    </citation>
    <scope>NUCLEOTIDE SEQUENCE [LARGE SCALE GENOMIC DNA]</scope>
    <source>
        <strain>Boxer</strain>
    </source>
</reference>
<reference key="2">
    <citation type="journal article" date="2003" name="Mol. Cell">
        <title>Oligosaccharyltransferase isoforms that contain different catalytic STT3 subunits have distinct enzymatic properties.</title>
        <authorList>
            <person name="Kelleher D.J."/>
            <person name="Karaoglu D."/>
            <person name="Mandon E.C."/>
            <person name="Gilmore R."/>
        </authorList>
    </citation>
    <scope>IDENTIFICATION IN THE OLIGOSACCHARYLTRANSFERASE (OST) COMPLEX</scope>
    <scope>FUNCTION OF THE OLIGOSACCHARYLTRANSFERASE (OST) COMPLEX</scope>
    <scope>SUBCELLULAR LOCATION</scope>
</reference>
<reference key="3">
    <citation type="journal article" date="2005" name="Biochemistry">
        <title>Proteomic analysis of mammalian oligosaccharyltransferase reveals multiple subcomplexes that contain Sec61, TRAP, and two potential new subunits.</title>
        <authorList>
            <person name="Shibatani T."/>
            <person name="David L.L."/>
            <person name="McCormack A.L."/>
            <person name="Frueh K."/>
            <person name="Skach W.R."/>
        </authorList>
    </citation>
    <scope>IDENTIFICATION IN THE OLIGOSACCHARYLTRANSFERASE (OST) COMPLEX</scope>
</reference>
<reference key="4">
    <citation type="journal article" date="2014" name="J. Cell Biol.">
        <title>Oxidoreductase activity is necessary for N-glycosylation of cysteine-proximal acceptor sites in glycoproteins.</title>
        <authorList>
            <person name="Cherepanova N.A."/>
            <person name="Shrimal S."/>
            <person name="Gilmore R."/>
        </authorList>
    </citation>
    <scope>IDENTIFICATION IN THE OLIGOSACCHARYLTRANSFERASE (OST) COMPLEX</scope>
</reference>
<reference key="5">
    <citation type="journal article" date="2018" name="Science">
        <title>Structural basis for coupling protein transport and N-glycosylation at the mammalian endoplasmic reticulum.</title>
        <authorList>
            <person name="Braunger K."/>
            <person name="Pfeffer S."/>
            <person name="Shrimal S."/>
            <person name="Gilmore R."/>
            <person name="Berninghausen O."/>
            <person name="Mandon E.C."/>
            <person name="Becker T."/>
            <person name="Foerster F."/>
            <person name="Beckmann R."/>
        </authorList>
    </citation>
    <scope>STRUCTURE BY ELECTRON MICROSCOPY (4.20 ANGSTROMS)</scope>
</reference>
<name>RPN2_CANLF</name>
<evidence type="ECO:0000250" key="1">
    <source>
        <dbReference type="UniProtKB" id="P04844"/>
    </source>
</evidence>
<evidence type="ECO:0000250" key="2">
    <source>
        <dbReference type="UniProtKB" id="Q9DBG6"/>
    </source>
</evidence>
<evidence type="ECO:0000255" key="3"/>
<evidence type="ECO:0000269" key="4">
    <source>
    </source>
</evidence>
<evidence type="ECO:0000269" key="5">
    <source>
    </source>
</evidence>
<evidence type="ECO:0000269" key="6">
    <source>
    </source>
</evidence>
<evidence type="ECO:0000269" key="7">
    <source>
    </source>
</evidence>
<evidence type="ECO:0000305" key="8"/>
<evidence type="ECO:0000305" key="9">
    <source>
    </source>
</evidence>
<gene>
    <name evidence="1" type="primary">RPN2</name>
</gene>
<keyword id="KW-0002">3D-structure</keyword>
<keyword id="KW-0256">Endoplasmic reticulum</keyword>
<keyword id="KW-0325">Glycoprotein</keyword>
<keyword id="KW-1017">Isopeptide bond</keyword>
<keyword id="KW-0472">Membrane</keyword>
<keyword id="KW-1185">Reference proteome</keyword>
<keyword id="KW-0732">Signal</keyword>
<keyword id="KW-0812">Transmembrane</keyword>
<keyword id="KW-1133">Transmembrane helix</keyword>
<keyword id="KW-0832">Ubl conjugation</keyword>
<accession>F1PCT7</accession>
<proteinExistence type="evidence at protein level"/>
<sequence length="631" mass="69034">MASPGASTVFLLALTILAGTQALTPTHYLTKPDVERLRASLDRPFTSLESAFYSIVGLSSLGVQVPDVKKACAFIKSNLDPGNVDSLFYAAQSSQALSGCEISISNETKDLLLAAVSEDSSVTQIYHAVAALSGFGLPLASQEALSALTARLSKEETVLATVQALQTASHLSQQADLRSIVEEIEDLVARLDELGGVYLQFEEGLETTALFVAATYKLMDHVGTEPSIKEDQVIQLMNAIFSKKNFESLSEAFSVASAAAALSQNRYHVPVVVVPEGTPSDTHEQAILRLQVTNVLSQPLTQATVKLEHAKSVASRATVLQKTSFTPVGDVFELNFMNVKFSSGYYDFSVKVEGDNRYIANSVELRVKISTEVGITNVDLSTVDKDQSIAPKTTRVTYPAKAKGTFIADSHQNFALFFQLVDVNTGAELTPHQTFVRLHNQKTGQEVVFVAEPDSKNVYKFELDTSERKIEFDSASGTYTLYLIIGDATLKNPILWNVADVVIKFPEEDAPSTVLSKNLFTPKQEIQHLFREPEKRPPTVVSNTFTALILSPLLLLFALWIRIGANVSNFTFAPSTIIFHLGHAAMLGLMYVYWTQLNMFQTLKYLAILGSVTFLAGNRMLAQQAIKRTAH</sequence>
<dbReference type="EMBL" id="AAEX03013919">
    <property type="status" value="NOT_ANNOTATED_CDS"/>
    <property type="molecule type" value="Genomic_DNA"/>
</dbReference>
<dbReference type="EMBL" id="AAEX03013920">
    <property type="status" value="NOT_ANNOTATED_CDS"/>
    <property type="molecule type" value="Genomic_DNA"/>
</dbReference>
<dbReference type="RefSeq" id="XP_865679.1">
    <property type="nucleotide sequence ID" value="XM_860586.6"/>
</dbReference>
<dbReference type="PDB" id="6FTG">
    <property type="method" value="EM"/>
    <property type="resolution" value="9.10 A"/>
    <property type="chains" value="8=-"/>
</dbReference>
<dbReference type="PDB" id="6FTI">
    <property type="method" value="EM"/>
    <property type="resolution" value="4.20 A"/>
    <property type="chains" value="8=-"/>
</dbReference>
<dbReference type="PDB" id="6FTJ">
    <property type="method" value="EM"/>
    <property type="resolution" value="4.70 A"/>
    <property type="chains" value="8=-"/>
</dbReference>
<dbReference type="PDBsum" id="6FTG"/>
<dbReference type="PDBsum" id="6FTI"/>
<dbReference type="PDBsum" id="6FTJ"/>
<dbReference type="SMR" id="F1PCT7"/>
<dbReference type="CORUM" id="F1PCT7"/>
<dbReference type="FunCoup" id="F1PCT7">
    <property type="interactions" value="2610"/>
</dbReference>
<dbReference type="STRING" id="9615.ENSCAFP00000062722"/>
<dbReference type="GlyCosmos" id="F1PCT7">
    <property type="glycosylation" value="1 site, No reported glycans"/>
</dbReference>
<dbReference type="PaxDb" id="9612-ENSCAFP00000012859"/>
<dbReference type="Ensembl" id="ENSCAFT00000013898.5">
    <property type="protein sequence ID" value="ENSCAFP00000012859.4"/>
    <property type="gene ID" value="ENSCAFG00000008737.6"/>
</dbReference>
<dbReference type="GeneID" id="477223"/>
<dbReference type="KEGG" id="cfa:477223"/>
<dbReference type="CTD" id="6185"/>
<dbReference type="VGNC" id="VGNC:45722">
    <property type="gene designation" value="RPN2"/>
</dbReference>
<dbReference type="eggNOG" id="KOG2447">
    <property type="taxonomic scope" value="Eukaryota"/>
</dbReference>
<dbReference type="InParanoid" id="F1PCT7"/>
<dbReference type="OrthoDB" id="432292at2759"/>
<dbReference type="UniPathway" id="UPA00378"/>
<dbReference type="Proteomes" id="UP000002254">
    <property type="component" value="Chromosome 24"/>
</dbReference>
<dbReference type="Proteomes" id="UP000694429">
    <property type="component" value="Unplaced"/>
</dbReference>
<dbReference type="Proteomes" id="UP000694542">
    <property type="component" value="Unplaced"/>
</dbReference>
<dbReference type="Proteomes" id="UP000805418">
    <property type="component" value="Unplaced"/>
</dbReference>
<dbReference type="Bgee" id="ENSCAFG00000008737">
    <property type="expression patterns" value="Expressed in right cardiac atrium and 47 other cell types or tissues"/>
</dbReference>
<dbReference type="GO" id="GO:0008250">
    <property type="term" value="C:oligosaccharyltransferase complex"/>
    <property type="evidence" value="ECO:0000314"/>
    <property type="project" value="UniProtKB"/>
</dbReference>
<dbReference type="GO" id="GO:0006486">
    <property type="term" value="P:protein glycosylation"/>
    <property type="evidence" value="ECO:0000314"/>
    <property type="project" value="UniProtKB"/>
</dbReference>
<dbReference type="GO" id="GO:0006487">
    <property type="term" value="P:protein N-linked glycosylation"/>
    <property type="evidence" value="ECO:0000318"/>
    <property type="project" value="GO_Central"/>
</dbReference>
<dbReference type="InterPro" id="IPR055375">
    <property type="entry name" value="Ribophorin_II_2nd"/>
</dbReference>
<dbReference type="InterPro" id="IPR055374">
    <property type="entry name" value="Ribophorin_II_3rd"/>
</dbReference>
<dbReference type="InterPro" id="IPR056790">
    <property type="entry name" value="Ribophorin_II_C"/>
</dbReference>
<dbReference type="InterPro" id="IPR055373">
    <property type="entry name" value="Ribophorin_II_N"/>
</dbReference>
<dbReference type="InterPro" id="IPR008814">
    <property type="entry name" value="Swp1"/>
</dbReference>
<dbReference type="PANTHER" id="PTHR12640:SF0">
    <property type="entry name" value="DOLICHYL-DIPHOSPHOOLIGOSACCHARIDE--PROTEIN GLYCOSYLTRANSFERASE SUBUNIT 2"/>
    <property type="match status" value="1"/>
</dbReference>
<dbReference type="PANTHER" id="PTHR12640">
    <property type="entry name" value="RIBOPHORIN II"/>
    <property type="match status" value="1"/>
</dbReference>
<dbReference type="Pfam" id="PF05817">
    <property type="entry name" value="Ribophorin_II"/>
    <property type="match status" value="1"/>
</dbReference>
<dbReference type="Pfam" id="PF23861">
    <property type="entry name" value="Ribophorin_II_2nd"/>
    <property type="match status" value="1"/>
</dbReference>
<dbReference type="Pfam" id="PF23860">
    <property type="entry name" value="Ribophorin_II_3rd"/>
    <property type="match status" value="1"/>
</dbReference>
<dbReference type="Pfam" id="PF25147">
    <property type="entry name" value="Ribophorin_II_C"/>
    <property type="match status" value="1"/>
</dbReference>
<comment type="function">
    <text evidence="4">Subunit of the oligosaccharyl transferase (OST) complex that catalyzes the initial transfer of a defined glycan (Glc(3)Man(9)GlcNAc(2) in eukaryotes) from the lipid carrier dolichol-pyrophosphate to an asparagine residue within an Asn-X-Ser/Thr consensus motif in nascent polypeptide chains, the first step in protein N-glycosylation. N-glycosylation occurs cotranslationally and the complex associates with the Sec61 complex at the channel-forming translocon complex that mediates protein translocation across the endoplasmic reticulum (ER). All subunits are required for a maximal enzyme activity.</text>
</comment>
<comment type="pathway">
    <text evidence="1">Protein modification; protein glycosylation.</text>
</comment>
<comment type="subunit">
    <text evidence="1 2 4 5 6 7">Component of the oligosaccharyltransferase (OST) complex. OST exists in two different complex forms which contain common core subunits RPN1, RPN2, OST48, OST4, DAD1 and TMEM258, either STT3A or STT3B as catalytic subunits, and form-specific accessory subunits (PubMed:12887896, PubMed:15835887, PubMed:25135935). STT3A complex assembly occurs through the formation of 3 subcomplexes. Subcomplex 1 contains RPN1 and TMEM258, subcomplex 2 contains the STT3A-specific subunits STT3A, DC2/OSTC, and KCP2 as well as the core subunit OST4, and subcomplex 3 contains RPN2, DAD1, and OST48. The STT3A complex can form stable complexes with the Sec61 complex or with both the Sec61 and TRAP complexes (PubMed:15835887, PubMed:29519914). Interacts with DDI2 (By similarity). Interacts with TMEM35A/NACHO (By similarity).</text>
</comment>
<comment type="subcellular location">
    <subcellularLocation>
        <location evidence="4">Endoplasmic reticulum</location>
    </subcellularLocation>
    <subcellularLocation>
        <location>Endoplasmic reticulum membrane</location>
        <topology evidence="7">Multi-pass membrane protein</topology>
    </subcellularLocation>
</comment>
<comment type="similarity">
    <text evidence="8">Belongs to the SWP1 family.</text>
</comment>